<gene>
    <name evidence="1" type="primary">clpP</name>
    <name type="ordered locus">MGAS9429_Spy0328</name>
</gene>
<protein>
    <recommendedName>
        <fullName evidence="1">ATP-dependent Clp protease proteolytic subunit</fullName>
        <ecNumber evidence="1">3.4.21.92</ecNumber>
    </recommendedName>
    <alternativeName>
        <fullName evidence="1">Endopeptidase Clp</fullName>
    </alternativeName>
</protein>
<comment type="function">
    <text evidence="1">Cleaves peptides in various proteins in a process that requires ATP hydrolysis. Has a chymotrypsin-like activity. Plays a major role in the degradation of misfolded proteins.</text>
</comment>
<comment type="catalytic activity">
    <reaction evidence="1">
        <text>Hydrolysis of proteins to small peptides in the presence of ATP and magnesium. alpha-casein is the usual test substrate. In the absence of ATP, only oligopeptides shorter than five residues are hydrolyzed (such as succinyl-Leu-Tyr-|-NHMec, and Leu-Tyr-Leu-|-Tyr-Trp, in which cleavage of the -Tyr-|-Leu- and -Tyr-|-Trp bonds also occurs).</text>
        <dbReference type="EC" id="3.4.21.92"/>
    </reaction>
</comment>
<comment type="subunit">
    <text evidence="1">Fourteen ClpP subunits assemble into 2 heptameric rings which stack back to back to give a disk-like structure with a central cavity, resembling the structure of eukaryotic proteasomes.</text>
</comment>
<comment type="subcellular location">
    <subcellularLocation>
        <location evidence="1">Cytoplasm</location>
    </subcellularLocation>
</comment>
<comment type="similarity">
    <text evidence="1">Belongs to the peptidase S14 family.</text>
</comment>
<name>CLPP_STRPC</name>
<sequence length="196" mass="21649">MIPVVIEQTSRGERSYDIYSRLLKDRIIMLTGPVEDNMANSVIAQLLFLDAQDNTKDIYLYVNTPGGSVSAGLAIVDTMNFIKADVQTIVMGMAASMGTVIASSGTKGKRFMLPNAEYMIHQPMGGTGGGTQQTDMAIAAEHLLKTRHRLEKILAQNAGKTIKQIHKDAERDYWMSAEETLAYGFIDEIMENNELK</sequence>
<dbReference type="EC" id="3.4.21.92" evidence="1"/>
<dbReference type="EMBL" id="CP000259">
    <property type="protein sequence ID" value="ABF31516.1"/>
    <property type="molecule type" value="Genomic_DNA"/>
</dbReference>
<dbReference type="RefSeq" id="WP_002985850.1">
    <property type="nucleotide sequence ID" value="NC_008021.1"/>
</dbReference>
<dbReference type="SMR" id="Q1JN83"/>
<dbReference type="MEROPS" id="S14.001"/>
<dbReference type="KEGG" id="spk:MGAS9429_Spy0328"/>
<dbReference type="HOGENOM" id="CLU_058707_3_2_9"/>
<dbReference type="Proteomes" id="UP000002433">
    <property type="component" value="Chromosome"/>
</dbReference>
<dbReference type="GO" id="GO:0005737">
    <property type="term" value="C:cytoplasm"/>
    <property type="evidence" value="ECO:0007669"/>
    <property type="project" value="UniProtKB-SubCell"/>
</dbReference>
<dbReference type="GO" id="GO:0009368">
    <property type="term" value="C:endopeptidase Clp complex"/>
    <property type="evidence" value="ECO:0007669"/>
    <property type="project" value="TreeGrafter"/>
</dbReference>
<dbReference type="GO" id="GO:0004176">
    <property type="term" value="F:ATP-dependent peptidase activity"/>
    <property type="evidence" value="ECO:0007669"/>
    <property type="project" value="InterPro"/>
</dbReference>
<dbReference type="GO" id="GO:0051117">
    <property type="term" value="F:ATPase binding"/>
    <property type="evidence" value="ECO:0007669"/>
    <property type="project" value="TreeGrafter"/>
</dbReference>
<dbReference type="GO" id="GO:0004252">
    <property type="term" value="F:serine-type endopeptidase activity"/>
    <property type="evidence" value="ECO:0007669"/>
    <property type="project" value="UniProtKB-UniRule"/>
</dbReference>
<dbReference type="GO" id="GO:0006515">
    <property type="term" value="P:protein quality control for misfolded or incompletely synthesized proteins"/>
    <property type="evidence" value="ECO:0007669"/>
    <property type="project" value="TreeGrafter"/>
</dbReference>
<dbReference type="CDD" id="cd07017">
    <property type="entry name" value="S14_ClpP_2"/>
    <property type="match status" value="1"/>
</dbReference>
<dbReference type="FunFam" id="3.90.226.10:FF:000014">
    <property type="entry name" value="ATP-dependent Clp protease proteolytic subunit"/>
    <property type="match status" value="1"/>
</dbReference>
<dbReference type="Gene3D" id="3.90.226.10">
    <property type="entry name" value="2-enoyl-CoA Hydratase, Chain A, domain 1"/>
    <property type="match status" value="1"/>
</dbReference>
<dbReference type="HAMAP" id="MF_00444">
    <property type="entry name" value="ClpP"/>
    <property type="match status" value="1"/>
</dbReference>
<dbReference type="InterPro" id="IPR001907">
    <property type="entry name" value="ClpP"/>
</dbReference>
<dbReference type="InterPro" id="IPR029045">
    <property type="entry name" value="ClpP/crotonase-like_dom_sf"/>
</dbReference>
<dbReference type="InterPro" id="IPR023562">
    <property type="entry name" value="ClpP/TepA"/>
</dbReference>
<dbReference type="InterPro" id="IPR033135">
    <property type="entry name" value="ClpP_His_AS"/>
</dbReference>
<dbReference type="InterPro" id="IPR018215">
    <property type="entry name" value="ClpP_Ser_AS"/>
</dbReference>
<dbReference type="NCBIfam" id="NF001368">
    <property type="entry name" value="PRK00277.1"/>
    <property type="match status" value="1"/>
</dbReference>
<dbReference type="NCBIfam" id="NF009205">
    <property type="entry name" value="PRK12553.1"/>
    <property type="match status" value="1"/>
</dbReference>
<dbReference type="PANTHER" id="PTHR10381">
    <property type="entry name" value="ATP-DEPENDENT CLP PROTEASE PROTEOLYTIC SUBUNIT"/>
    <property type="match status" value="1"/>
</dbReference>
<dbReference type="PANTHER" id="PTHR10381:SF70">
    <property type="entry name" value="ATP-DEPENDENT CLP PROTEASE PROTEOLYTIC SUBUNIT"/>
    <property type="match status" value="1"/>
</dbReference>
<dbReference type="Pfam" id="PF00574">
    <property type="entry name" value="CLP_protease"/>
    <property type="match status" value="1"/>
</dbReference>
<dbReference type="PRINTS" id="PR00127">
    <property type="entry name" value="CLPPROTEASEP"/>
</dbReference>
<dbReference type="SUPFAM" id="SSF52096">
    <property type="entry name" value="ClpP/crotonase"/>
    <property type="match status" value="1"/>
</dbReference>
<dbReference type="PROSITE" id="PS00382">
    <property type="entry name" value="CLP_PROTEASE_HIS"/>
    <property type="match status" value="1"/>
</dbReference>
<dbReference type="PROSITE" id="PS00381">
    <property type="entry name" value="CLP_PROTEASE_SER"/>
    <property type="match status" value="1"/>
</dbReference>
<evidence type="ECO:0000255" key="1">
    <source>
        <dbReference type="HAMAP-Rule" id="MF_00444"/>
    </source>
</evidence>
<organism>
    <name type="scientific">Streptococcus pyogenes serotype M12 (strain MGAS9429)</name>
    <dbReference type="NCBI Taxonomy" id="370551"/>
    <lineage>
        <taxon>Bacteria</taxon>
        <taxon>Bacillati</taxon>
        <taxon>Bacillota</taxon>
        <taxon>Bacilli</taxon>
        <taxon>Lactobacillales</taxon>
        <taxon>Streptococcaceae</taxon>
        <taxon>Streptococcus</taxon>
    </lineage>
</organism>
<keyword id="KW-0963">Cytoplasm</keyword>
<keyword id="KW-0378">Hydrolase</keyword>
<keyword id="KW-0645">Protease</keyword>
<keyword id="KW-0720">Serine protease</keyword>
<feature type="chain" id="PRO_0000252853" description="ATP-dependent Clp protease proteolytic subunit">
    <location>
        <begin position="1"/>
        <end position="196"/>
    </location>
</feature>
<feature type="active site" description="Nucleophile" evidence="1">
    <location>
        <position position="96"/>
    </location>
</feature>
<feature type="active site" evidence="1">
    <location>
        <position position="121"/>
    </location>
</feature>
<accession>Q1JN83</accession>
<reference key="1">
    <citation type="journal article" date="2006" name="Proc. Natl. Acad. Sci. U.S.A.">
        <title>Molecular genetic anatomy of inter- and intraserotype variation in the human bacterial pathogen group A Streptococcus.</title>
        <authorList>
            <person name="Beres S.B."/>
            <person name="Richter E.W."/>
            <person name="Nagiec M.J."/>
            <person name="Sumby P."/>
            <person name="Porcella S.F."/>
            <person name="DeLeo F.R."/>
            <person name="Musser J.M."/>
        </authorList>
    </citation>
    <scope>NUCLEOTIDE SEQUENCE [LARGE SCALE GENOMIC DNA]</scope>
    <source>
        <strain>MGAS9429</strain>
    </source>
</reference>
<proteinExistence type="inferred from homology"/>